<organism>
    <name type="scientific">Mannheimia succiniciproducens (strain KCTC 0769BP / MBEL55E)</name>
    <dbReference type="NCBI Taxonomy" id="221988"/>
    <lineage>
        <taxon>Bacteria</taxon>
        <taxon>Pseudomonadati</taxon>
        <taxon>Pseudomonadota</taxon>
        <taxon>Gammaproteobacteria</taxon>
        <taxon>Pasteurellales</taxon>
        <taxon>Pasteurellaceae</taxon>
        <taxon>Basfia</taxon>
    </lineage>
</organism>
<comment type="function">
    <text evidence="1">Could be involved in insertion of integral membrane proteins into the membrane.</text>
</comment>
<comment type="subcellular location">
    <subcellularLocation>
        <location evidence="1">Cell inner membrane</location>
        <topology evidence="1">Peripheral membrane protein</topology>
        <orientation evidence="1">Cytoplasmic side</orientation>
    </subcellularLocation>
</comment>
<comment type="similarity">
    <text evidence="1">Belongs to the UPF0161 family.</text>
</comment>
<comment type="sequence caution" evidence="2">
    <conflict type="erroneous initiation">
        <sequence resource="EMBL-CDS" id="AAU37089"/>
    </conflict>
</comment>
<evidence type="ECO:0000255" key="1">
    <source>
        <dbReference type="HAMAP-Rule" id="MF_00386"/>
    </source>
</evidence>
<evidence type="ECO:0000305" key="2"/>
<keyword id="KW-0997">Cell inner membrane</keyword>
<keyword id="KW-1003">Cell membrane</keyword>
<keyword id="KW-0472">Membrane</keyword>
<gene>
    <name type="ordered locus">MS0482</name>
</gene>
<proteinExistence type="inferred from homology"/>
<reference key="1">
    <citation type="journal article" date="2004" name="Nat. Biotechnol.">
        <title>The genome sequence of the capnophilic rumen bacterium Mannheimia succiniciproducens.</title>
        <authorList>
            <person name="Hong S.H."/>
            <person name="Kim J.S."/>
            <person name="Lee S.Y."/>
            <person name="In Y.H."/>
            <person name="Choi S.S."/>
            <person name="Rih J.-K."/>
            <person name="Kim C.H."/>
            <person name="Jeong H."/>
            <person name="Hur C.G."/>
            <person name="Kim J.J."/>
        </authorList>
    </citation>
    <scope>NUCLEOTIDE SEQUENCE [LARGE SCALE GENOMIC DNA]</scope>
    <source>
        <strain>KCTC 0769BP / MBEL55E</strain>
    </source>
</reference>
<sequence length="86" mass="9566">MATSHSLGEKILVKLIRFYQLAISPMIGPRCRFTPTCSCYGIEAIKTHGALKGSWLTLKRILKCHPLSKGGYDPVPPKINNNVEKK</sequence>
<dbReference type="EMBL" id="AE016827">
    <property type="protein sequence ID" value="AAU37089.1"/>
    <property type="status" value="ALT_INIT"/>
    <property type="molecule type" value="Genomic_DNA"/>
</dbReference>
<dbReference type="RefSeq" id="WP_083754305.1">
    <property type="nucleotide sequence ID" value="NC_006300.1"/>
</dbReference>
<dbReference type="STRING" id="221988.MS0482"/>
<dbReference type="KEGG" id="msu:MS0482"/>
<dbReference type="eggNOG" id="COG0759">
    <property type="taxonomic scope" value="Bacteria"/>
</dbReference>
<dbReference type="HOGENOM" id="CLU_144811_5_2_6"/>
<dbReference type="OrthoDB" id="9801753at2"/>
<dbReference type="Proteomes" id="UP000000607">
    <property type="component" value="Chromosome"/>
</dbReference>
<dbReference type="GO" id="GO:0005886">
    <property type="term" value="C:plasma membrane"/>
    <property type="evidence" value="ECO:0007669"/>
    <property type="project" value="UniProtKB-SubCell"/>
</dbReference>
<dbReference type="HAMAP" id="MF_00386">
    <property type="entry name" value="UPF0161_YidD"/>
    <property type="match status" value="1"/>
</dbReference>
<dbReference type="InterPro" id="IPR002696">
    <property type="entry name" value="Membr_insert_effic_factor_YidD"/>
</dbReference>
<dbReference type="NCBIfam" id="TIGR00278">
    <property type="entry name" value="membrane protein insertion efficiency factor YidD"/>
    <property type="match status" value="1"/>
</dbReference>
<dbReference type="PANTHER" id="PTHR33383">
    <property type="entry name" value="MEMBRANE PROTEIN INSERTION EFFICIENCY FACTOR-RELATED"/>
    <property type="match status" value="1"/>
</dbReference>
<dbReference type="PANTHER" id="PTHR33383:SF1">
    <property type="entry name" value="MEMBRANE PROTEIN INSERTION EFFICIENCY FACTOR-RELATED"/>
    <property type="match status" value="1"/>
</dbReference>
<dbReference type="Pfam" id="PF01809">
    <property type="entry name" value="YidD"/>
    <property type="match status" value="1"/>
</dbReference>
<dbReference type="SMART" id="SM01234">
    <property type="entry name" value="Haemolytic"/>
    <property type="match status" value="1"/>
</dbReference>
<feature type="chain" id="PRO_0000253123" description="Putative membrane protein insertion efficiency factor">
    <location>
        <begin position="1"/>
        <end position="86"/>
    </location>
</feature>
<protein>
    <recommendedName>
        <fullName evidence="1">Putative membrane protein insertion efficiency factor</fullName>
    </recommendedName>
</protein>
<name>YIDD_MANSM</name>
<accession>Q65VC1</accession>